<reference key="1">
    <citation type="journal article" date="2006" name="Genome Res.">
        <title>Skewed genomic variability in strains of the toxigenic bacterial pathogen, Clostridium perfringens.</title>
        <authorList>
            <person name="Myers G.S.A."/>
            <person name="Rasko D.A."/>
            <person name="Cheung J.K."/>
            <person name="Ravel J."/>
            <person name="Seshadri R."/>
            <person name="DeBoy R.T."/>
            <person name="Ren Q."/>
            <person name="Varga J."/>
            <person name="Awad M.M."/>
            <person name="Brinkac L.M."/>
            <person name="Daugherty S.C."/>
            <person name="Haft D.H."/>
            <person name="Dodson R.J."/>
            <person name="Madupu R."/>
            <person name="Nelson W.C."/>
            <person name="Rosovitz M.J."/>
            <person name="Sullivan S.A."/>
            <person name="Khouri H."/>
            <person name="Dimitrov G.I."/>
            <person name="Watkins K.L."/>
            <person name="Mulligan S."/>
            <person name="Benton J."/>
            <person name="Radune D."/>
            <person name="Fisher D.J."/>
            <person name="Atkins H.S."/>
            <person name="Hiscox T."/>
            <person name="Jost B.H."/>
            <person name="Billington S.J."/>
            <person name="Songer J.G."/>
            <person name="McClane B.A."/>
            <person name="Titball R.W."/>
            <person name="Rood J.I."/>
            <person name="Melville S.B."/>
            <person name="Paulsen I.T."/>
        </authorList>
    </citation>
    <scope>NUCLEOTIDE SEQUENCE [LARGE SCALE GENOMIC DNA]</scope>
    <source>
        <strain>SM101 / Type A</strain>
    </source>
</reference>
<evidence type="ECO:0000255" key="1">
    <source>
        <dbReference type="HAMAP-Rule" id="MF_00186"/>
    </source>
</evidence>
<sequence>MKKYIVALDQGTTSSRAIIFDKEQNIIGVSQKEFNQIYPREGWVEHDPMEIWATQYSVLQEVMAKCNITQENIAAIGITNQRETTIVWDKNTGVPIYNAIVWQCRRTADICDDLKERDGLVDYIRENTGLVLDAYFSGTKIKWILDNVEGAREKAEKGELLFGTVDSWLVWKLTNGKVHVTDYTNASRTMIFNIKNLEWDERMLKELDIPRSMLPEVKNSSEIYGYANLGAKGGIRVPIAGIAGDQQAALFGQAAFNKGDVKNTYGTGCFLLMNTGEELVKSKSGLLTTIAIGLHGKVQYALEGSVFVGGAVIQWLRDELRIISDSSDTEYFATKVEDNGGVYVVPAFVGLGAPYWDMYARGTIVGLTRGTNRNHIIRASLESIAYQTRDVLEAMINDVGYDINCIKVDGGASRNNFLMQFQSDLVGKKVIKPIITETTALGAAYLAGLAVGYWSDKEEIAKLWFASEEFEPNISEERRNKYYKKWKKAIERSKEWAIED</sequence>
<dbReference type="EC" id="2.7.1.30" evidence="1"/>
<dbReference type="EMBL" id="CP000312">
    <property type="protein sequence ID" value="ABG86056.1"/>
    <property type="molecule type" value="Genomic_DNA"/>
</dbReference>
<dbReference type="RefSeq" id="WP_011593240.1">
    <property type="nucleotide sequence ID" value="NC_008262.1"/>
</dbReference>
<dbReference type="SMR" id="Q0SQ01"/>
<dbReference type="KEGG" id="cpr:CPR_2559"/>
<dbReference type="UniPathway" id="UPA00618">
    <property type="reaction ID" value="UER00672"/>
</dbReference>
<dbReference type="Proteomes" id="UP000001824">
    <property type="component" value="Chromosome"/>
</dbReference>
<dbReference type="GO" id="GO:0005829">
    <property type="term" value="C:cytosol"/>
    <property type="evidence" value="ECO:0007669"/>
    <property type="project" value="TreeGrafter"/>
</dbReference>
<dbReference type="GO" id="GO:0005524">
    <property type="term" value="F:ATP binding"/>
    <property type="evidence" value="ECO:0007669"/>
    <property type="project" value="UniProtKB-UniRule"/>
</dbReference>
<dbReference type="GO" id="GO:0004370">
    <property type="term" value="F:glycerol kinase activity"/>
    <property type="evidence" value="ECO:0000250"/>
    <property type="project" value="UniProtKB"/>
</dbReference>
<dbReference type="GO" id="GO:0019563">
    <property type="term" value="P:glycerol catabolic process"/>
    <property type="evidence" value="ECO:0007669"/>
    <property type="project" value="UniProtKB-UniRule"/>
</dbReference>
<dbReference type="GO" id="GO:0006071">
    <property type="term" value="P:glycerol metabolic process"/>
    <property type="evidence" value="ECO:0000250"/>
    <property type="project" value="UniProtKB"/>
</dbReference>
<dbReference type="GO" id="GO:0006072">
    <property type="term" value="P:glycerol-3-phosphate metabolic process"/>
    <property type="evidence" value="ECO:0007669"/>
    <property type="project" value="InterPro"/>
</dbReference>
<dbReference type="CDD" id="cd07786">
    <property type="entry name" value="FGGY_EcGK_like"/>
    <property type="match status" value="1"/>
</dbReference>
<dbReference type="FunFam" id="3.30.420.40:FF:000007">
    <property type="entry name" value="Glycerol kinase"/>
    <property type="match status" value="1"/>
</dbReference>
<dbReference type="FunFam" id="3.30.420.40:FF:000008">
    <property type="entry name" value="Glycerol kinase"/>
    <property type="match status" value="1"/>
</dbReference>
<dbReference type="Gene3D" id="3.30.420.40">
    <property type="match status" value="2"/>
</dbReference>
<dbReference type="HAMAP" id="MF_00186">
    <property type="entry name" value="Glycerol_kin"/>
    <property type="match status" value="1"/>
</dbReference>
<dbReference type="InterPro" id="IPR043129">
    <property type="entry name" value="ATPase_NBD"/>
</dbReference>
<dbReference type="InterPro" id="IPR000577">
    <property type="entry name" value="Carb_kinase_FGGY"/>
</dbReference>
<dbReference type="InterPro" id="IPR018483">
    <property type="entry name" value="Carb_kinase_FGGY_CS"/>
</dbReference>
<dbReference type="InterPro" id="IPR018485">
    <property type="entry name" value="FGGY_C"/>
</dbReference>
<dbReference type="InterPro" id="IPR018484">
    <property type="entry name" value="FGGY_N"/>
</dbReference>
<dbReference type="InterPro" id="IPR005999">
    <property type="entry name" value="Glycerol_kin"/>
</dbReference>
<dbReference type="NCBIfam" id="TIGR01311">
    <property type="entry name" value="glycerol_kin"/>
    <property type="match status" value="1"/>
</dbReference>
<dbReference type="NCBIfam" id="NF000756">
    <property type="entry name" value="PRK00047.1"/>
    <property type="match status" value="1"/>
</dbReference>
<dbReference type="PANTHER" id="PTHR10196:SF69">
    <property type="entry name" value="GLYCEROL KINASE"/>
    <property type="match status" value="1"/>
</dbReference>
<dbReference type="PANTHER" id="PTHR10196">
    <property type="entry name" value="SUGAR KINASE"/>
    <property type="match status" value="1"/>
</dbReference>
<dbReference type="Pfam" id="PF02782">
    <property type="entry name" value="FGGY_C"/>
    <property type="match status" value="1"/>
</dbReference>
<dbReference type="Pfam" id="PF00370">
    <property type="entry name" value="FGGY_N"/>
    <property type="match status" value="1"/>
</dbReference>
<dbReference type="PIRSF" id="PIRSF000538">
    <property type="entry name" value="GlpK"/>
    <property type="match status" value="1"/>
</dbReference>
<dbReference type="SUPFAM" id="SSF53067">
    <property type="entry name" value="Actin-like ATPase domain"/>
    <property type="match status" value="2"/>
</dbReference>
<dbReference type="PROSITE" id="PS00933">
    <property type="entry name" value="FGGY_KINASES_1"/>
    <property type="match status" value="1"/>
</dbReference>
<dbReference type="PROSITE" id="PS00445">
    <property type="entry name" value="FGGY_KINASES_2"/>
    <property type="match status" value="1"/>
</dbReference>
<protein>
    <recommendedName>
        <fullName evidence="1">Glycerol kinase</fullName>
        <ecNumber evidence="1">2.7.1.30</ecNumber>
    </recommendedName>
    <alternativeName>
        <fullName evidence="1">ATP:glycerol 3-phosphotransferase</fullName>
    </alternativeName>
    <alternativeName>
        <fullName evidence="1">Glycerokinase</fullName>
        <shortName evidence="1">GK</shortName>
    </alternativeName>
</protein>
<gene>
    <name evidence="1" type="primary">glpK</name>
    <name type="ordered locus">CPR_2559</name>
</gene>
<feature type="chain" id="PRO_1000020723" description="Glycerol kinase">
    <location>
        <begin position="1"/>
        <end position="500"/>
    </location>
</feature>
<feature type="binding site" evidence="1">
    <location>
        <position position="12"/>
    </location>
    <ligand>
        <name>ADP</name>
        <dbReference type="ChEBI" id="CHEBI:456216"/>
    </ligand>
</feature>
<feature type="binding site" evidence="1">
    <location>
        <position position="12"/>
    </location>
    <ligand>
        <name>ATP</name>
        <dbReference type="ChEBI" id="CHEBI:30616"/>
    </ligand>
</feature>
<feature type="binding site" evidence="1">
    <location>
        <position position="12"/>
    </location>
    <ligand>
        <name>sn-glycerol 3-phosphate</name>
        <dbReference type="ChEBI" id="CHEBI:57597"/>
    </ligand>
</feature>
<feature type="binding site" evidence="1">
    <location>
        <position position="13"/>
    </location>
    <ligand>
        <name>ATP</name>
        <dbReference type="ChEBI" id="CHEBI:30616"/>
    </ligand>
</feature>
<feature type="binding site" evidence="1">
    <location>
        <position position="14"/>
    </location>
    <ligand>
        <name>ATP</name>
        <dbReference type="ChEBI" id="CHEBI:30616"/>
    </ligand>
</feature>
<feature type="binding site" evidence="1">
    <location>
        <position position="16"/>
    </location>
    <ligand>
        <name>ADP</name>
        <dbReference type="ChEBI" id="CHEBI:456216"/>
    </ligand>
</feature>
<feature type="binding site" evidence="1">
    <location>
        <position position="82"/>
    </location>
    <ligand>
        <name>glycerol</name>
        <dbReference type="ChEBI" id="CHEBI:17754"/>
    </ligand>
</feature>
<feature type="binding site" evidence="1">
    <location>
        <position position="82"/>
    </location>
    <ligand>
        <name>sn-glycerol 3-phosphate</name>
        <dbReference type="ChEBI" id="CHEBI:57597"/>
    </ligand>
</feature>
<feature type="binding site" evidence="1">
    <location>
        <position position="83"/>
    </location>
    <ligand>
        <name>glycerol</name>
        <dbReference type="ChEBI" id="CHEBI:17754"/>
    </ligand>
</feature>
<feature type="binding site" evidence="1">
    <location>
        <position position="83"/>
    </location>
    <ligand>
        <name>sn-glycerol 3-phosphate</name>
        <dbReference type="ChEBI" id="CHEBI:57597"/>
    </ligand>
</feature>
<feature type="binding site" evidence="1">
    <location>
        <position position="135"/>
    </location>
    <ligand>
        <name>glycerol</name>
        <dbReference type="ChEBI" id="CHEBI:17754"/>
    </ligand>
</feature>
<feature type="binding site" evidence="1">
    <location>
        <position position="135"/>
    </location>
    <ligand>
        <name>sn-glycerol 3-phosphate</name>
        <dbReference type="ChEBI" id="CHEBI:57597"/>
    </ligand>
</feature>
<feature type="binding site" evidence="1">
    <location>
        <position position="245"/>
    </location>
    <ligand>
        <name>glycerol</name>
        <dbReference type="ChEBI" id="CHEBI:17754"/>
    </ligand>
</feature>
<feature type="binding site" evidence="1">
    <location>
        <position position="245"/>
    </location>
    <ligand>
        <name>sn-glycerol 3-phosphate</name>
        <dbReference type="ChEBI" id="CHEBI:57597"/>
    </ligand>
</feature>
<feature type="binding site" evidence="1">
    <location>
        <position position="246"/>
    </location>
    <ligand>
        <name>glycerol</name>
        <dbReference type="ChEBI" id="CHEBI:17754"/>
    </ligand>
</feature>
<feature type="binding site" evidence="1">
    <location>
        <position position="267"/>
    </location>
    <ligand>
        <name>ADP</name>
        <dbReference type="ChEBI" id="CHEBI:456216"/>
    </ligand>
</feature>
<feature type="binding site" evidence="1">
    <location>
        <position position="267"/>
    </location>
    <ligand>
        <name>ATP</name>
        <dbReference type="ChEBI" id="CHEBI:30616"/>
    </ligand>
</feature>
<feature type="binding site" evidence="1">
    <location>
        <position position="310"/>
    </location>
    <ligand>
        <name>ADP</name>
        <dbReference type="ChEBI" id="CHEBI:456216"/>
    </ligand>
</feature>
<feature type="binding site" evidence="1">
    <location>
        <position position="310"/>
    </location>
    <ligand>
        <name>ATP</name>
        <dbReference type="ChEBI" id="CHEBI:30616"/>
    </ligand>
</feature>
<feature type="binding site" evidence="1">
    <location>
        <position position="314"/>
    </location>
    <ligand>
        <name>ATP</name>
        <dbReference type="ChEBI" id="CHEBI:30616"/>
    </ligand>
</feature>
<feature type="binding site" evidence="1">
    <location>
        <position position="411"/>
    </location>
    <ligand>
        <name>ADP</name>
        <dbReference type="ChEBI" id="CHEBI:456216"/>
    </ligand>
</feature>
<feature type="binding site" evidence="1">
    <location>
        <position position="411"/>
    </location>
    <ligand>
        <name>ATP</name>
        <dbReference type="ChEBI" id="CHEBI:30616"/>
    </ligand>
</feature>
<feature type="binding site" evidence="1">
    <location>
        <position position="415"/>
    </location>
    <ligand>
        <name>ADP</name>
        <dbReference type="ChEBI" id="CHEBI:456216"/>
    </ligand>
</feature>
<accession>Q0SQ01</accession>
<name>GLPK_CLOPS</name>
<organism>
    <name type="scientific">Clostridium perfringens (strain SM101 / Type A)</name>
    <dbReference type="NCBI Taxonomy" id="289380"/>
    <lineage>
        <taxon>Bacteria</taxon>
        <taxon>Bacillati</taxon>
        <taxon>Bacillota</taxon>
        <taxon>Clostridia</taxon>
        <taxon>Eubacteriales</taxon>
        <taxon>Clostridiaceae</taxon>
        <taxon>Clostridium</taxon>
    </lineage>
</organism>
<comment type="function">
    <text evidence="1">Key enzyme in the regulation of glycerol uptake and metabolism. Catalyzes the phosphorylation of glycerol to yield sn-glycerol 3-phosphate.</text>
</comment>
<comment type="catalytic activity">
    <reaction evidence="1">
        <text>glycerol + ATP = sn-glycerol 3-phosphate + ADP + H(+)</text>
        <dbReference type="Rhea" id="RHEA:21644"/>
        <dbReference type="ChEBI" id="CHEBI:15378"/>
        <dbReference type="ChEBI" id="CHEBI:17754"/>
        <dbReference type="ChEBI" id="CHEBI:30616"/>
        <dbReference type="ChEBI" id="CHEBI:57597"/>
        <dbReference type="ChEBI" id="CHEBI:456216"/>
        <dbReference type="EC" id="2.7.1.30"/>
    </reaction>
</comment>
<comment type="activity regulation">
    <text evidence="1">Activated by phosphorylation and inhibited by fructose 1,6-bisphosphate (FBP).</text>
</comment>
<comment type="pathway">
    <text evidence="1">Polyol metabolism; glycerol degradation via glycerol kinase pathway; sn-glycerol 3-phosphate from glycerol: step 1/1.</text>
</comment>
<comment type="subunit">
    <text evidence="1">Homotetramer and homodimer (in equilibrium).</text>
</comment>
<comment type="similarity">
    <text evidence="1">Belongs to the FGGY kinase family.</text>
</comment>
<keyword id="KW-0067">ATP-binding</keyword>
<keyword id="KW-0319">Glycerol metabolism</keyword>
<keyword id="KW-0418">Kinase</keyword>
<keyword id="KW-0547">Nucleotide-binding</keyword>
<keyword id="KW-0808">Transferase</keyword>
<proteinExistence type="inferred from homology"/>